<keyword id="KW-0445">Lipid transport</keyword>
<keyword id="KW-1185">Reference proteome</keyword>
<keyword id="KW-0964">Secreted</keyword>
<keyword id="KW-0732">Signal</keyword>
<keyword id="KW-0813">Transport</keyword>
<gene>
    <name type="primary">APOC4</name>
</gene>
<reference key="1">
    <citation type="submission" date="2015-10" db="EMBL/GenBank/DDBJ databases">
        <title>Genomic legacy of the African cheetah, Acinonyx jubatus.</title>
        <authorList>
            <person name="Dobrynin P."/>
            <person name="Liu S."/>
            <person name="Tamazian G."/>
            <person name="Xiong Z."/>
            <person name="Yurchenko A."/>
            <person name="Krasheninnikova K."/>
            <person name="Kliver S."/>
            <person name="Koepfli K.-P."/>
            <person name="Johnson W."/>
            <person name="Kuderna L."/>
            <person name="Garcia-Perez R."/>
            <person name="Montero M.D.M."/>
            <person name="Godinez R."/>
            <person name="Makunin A."/>
            <person name="Komissarov A."/>
            <person name="Brukhin V."/>
            <person name="Qiu W."/>
            <person name="Zhou L."/>
            <person name="Li F."/>
            <person name="Yi J."/>
            <person name="Driscoll C."/>
            <person name="Antunes A."/>
            <person name="Oleksyk T.K."/>
            <person name="Eizirik E."/>
            <person name="Perelman P."/>
            <person name="Roelke' M."/>
            <person name="Wildt D."/>
            <person name="Diekhans M."/>
            <person name="Marques-Bonet T."/>
            <person name="Schmidt-Kuntzel A."/>
            <person name="Marker L."/>
            <person name="Bhak J."/>
            <person name="Wang J."/>
            <person name="Zhang G."/>
            <person name="Obrien S."/>
        </authorList>
    </citation>
    <scope>NUCLEOTIDE SEQUENCE [LARGE SCALE GENOMIC DNA]</scope>
</reference>
<reference key="2">
    <citation type="unpublished observations" date="2017-04">
        <authorList>
            <person name="Puppione D.L."/>
        </authorList>
    </citation>
    <scope>IDENTIFICATION</scope>
</reference>
<evidence type="ECO:0000250" key="1"/>
<evidence type="ECO:0000250" key="2">
    <source>
        <dbReference type="UniProtKB" id="P55057"/>
    </source>
</evidence>
<evidence type="ECO:0000250" key="3">
    <source>
        <dbReference type="UniProtKB" id="Q3SYR5"/>
    </source>
</evidence>
<evidence type="ECO:0000305" key="4"/>
<feature type="signal peptide" evidence="2">
    <location>
        <begin position="1"/>
        <end position="27"/>
    </location>
</feature>
<feature type="chain" id="PRO_0000440152" description="Apolipoprotein C-IV" evidence="3">
    <location>
        <begin position="28"/>
        <end position="123"/>
    </location>
</feature>
<proteinExistence type="inferred from homology"/>
<comment type="function">
    <text evidence="1">May participate in lipoprotein metabolism.</text>
</comment>
<comment type="subcellular location">
    <subcellularLocation>
        <location evidence="1">Secreted</location>
    </subcellularLocation>
</comment>
<comment type="similarity">
    <text evidence="4">Belongs to the apolipoprotein C4 family.</text>
</comment>
<accession>P0DP53</accession>
<organism>
    <name type="scientific">Acinonyx jubatus</name>
    <name type="common">Cheetah</name>
    <dbReference type="NCBI Taxonomy" id="32536"/>
    <lineage>
        <taxon>Eukaryota</taxon>
        <taxon>Metazoa</taxon>
        <taxon>Chordata</taxon>
        <taxon>Craniata</taxon>
        <taxon>Vertebrata</taxon>
        <taxon>Euteleostomi</taxon>
        <taxon>Mammalia</taxon>
        <taxon>Eutheria</taxon>
        <taxon>Laurasiatheria</taxon>
        <taxon>Carnivora</taxon>
        <taxon>Feliformia</taxon>
        <taxon>Felidae</taxon>
        <taxon>Felinae</taxon>
        <taxon>Acinonyx</taxon>
    </lineage>
</organism>
<name>APOC4_ACIJB</name>
<dbReference type="EMBL" id="LLWD01000328">
    <property type="status" value="NOT_ANNOTATED_CDS"/>
    <property type="molecule type" value="Genomic_DNA"/>
</dbReference>
<dbReference type="RefSeq" id="XP_014926237.1">
    <property type="nucleotide sequence ID" value="XM_015070751.3"/>
</dbReference>
<dbReference type="GeneID" id="106973664"/>
<dbReference type="KEGG" id="aju:106973664"/>
<dbReference type="CTD" id="346"/>
<dbReference type="Proteomes" id="UP000504626">
    <property type="component" value="Unplaced"/>
</dbReference>
<dbReference type="GO" id="GO:0034364">
    <property type="term" value="C:high-density lipoprotein particle"/>
    <property type="evidence" value="ECO:0007669"/>
    <property type="project" value="TreeGrafter"/>
</dbReference>
<dbReference type="GO" id="GO:0034361">
    <property type="term" value="C:very-low-density lipoprotein particle"/>
    <property type="evidence" value="ECO:0007669"/>
    <property type="project" value="TreeGrafter"/>
</dbReference>
<dbReference type="GO" id="GO:0006869">
    <property type="term" value="P:lipid transport"/>
    <property type="evidence" value="ECO:0007669"/>
    <property type="project" value="UniProtKB-KW"/>
</dbReference>
<dbReference type="GO" id="GO:0010890">
    <property type="term" value="P:positive regulation of triglyceride storage"/>
    <property type="evidence" value="ECO:0007669"/>
    <property type="project" value="TreeGrafter"/>
</dbReference>
<dbReference type="GO" id="GO:0070328">
    <property type="term" value="P:triglyceride homeostasis"/>
    <property type="evidence" value="ECO:0007669"/>
    <property type="project" value="TreeGrafter"/>
</dbReference>
<dbReference type="InterPro" id="IPR028120">
    <property type="entry name" value="APOC4"/>
</dbReference>
<dbReference type="PANTHER" id="PTHR32288">
    <property type="entry name" value="APOLIPOPROTEIN C-IV"/>
    <property type="match status" value="1"/>
</dbReference>
<dbReference type="PANTHER" id="PTHR32288:SF0">
    <property type="entry name" value="APOLIPOPROTEIN C-IV"/>
    <property type="match status" value="1"/>
</dbReference>
<dbReference type="Pfam" id="PF15119">
    <property type="entry name" value="APOC4"/>
    <property type="match status" value="1"/>
</dbReference>
<sequence>MLVPGRRPQALPSLCFCILVLACVVACQQEVPAATPSMPPELVDSPWSLMKDKVKTLVTRTREKWQWFWGPEAFQGFVQAYYEDHLKDLRLRTQAWLRSSRDSLLNKAHSLCPQLLCRDGDKN</sequence>
<protein>
    <recommendedName>
        <fullName>Apolipoprotein C-IV</fullName>
        <shortName>Apo-CIV</shortName>
        <shortName>ApoC-IV</shortName>
    </recommendedName>
    <alternativeName>
        <fullName>Apolipoprotein C4</fullName>
    </alternativeName>
</protein>